<dbReference type="EMBL" id="AK041690">
    <property type="protein sequence ID" value="BAE20600.1"/>
    <property type="molecule type" value="mRNA"/>
</dbReference>
<dbReference type="EMBL" id="AK169696">
    <property type="protein sequence ID" value="BAE41311.1"/>
    <property type="molecule type" value="mRNA"/>
</dbReference>
<dbReference type="EMBL" id="AC154652">
    <property type="status" value="NOT_ANNOTATED_CDS"/>
    <property type="molecule type" value="Genomic_DNA"/>
</dbReference>
<dbReference type="EMBL" id="AC167247">
    <property type="status" value="NOT_ANNOTATED_CDS"/>
    <property type="molecule type" value="Genomic_DNA"/>
</dbReference>
<dbReference type="EMBL" id="CU024900">
    <property type="status" value="NOT_ANNOTATED_CDS"/>
    <property type="molecule type" value="Genomic_DNA"/>
</dbReference>
<dbReference type="CCDS" id="CCDS50054.1"/>
<dbReference type="RefSeq" id="NP_808491.2">
    <property type="nucleotide sequence ID" value="NM_177823.4"/>
</dbReference>
<dbReference type="PDB" id="3D4I">
    <property type="method" value="X-ray"/>
    <property type="resolution" value="1.95 A"/>
    <property type="chains" value="A/B/C/D=354-622"/>
</dbReference>
<dbReference type="PDB" id="3D6A">
    <property type="method" value="X-ray"/>
    <property type="resolution" value="2.25 A"/>
    <property type="chains" value="A/B/C/D=354-622"/>
</dbReference>
<dbReference type="PDB" id="3DB1">
    <property type="method" value="X-ray"/>
    <property type="resolution" value="2.77 A"/>
    <property type="chains" value="A/B/C/D=354-622"/>
</dbReference>
<dbReference type="PDBsum" id="3D4I"/>
<dbReference type="PDBsum" id="3D6A"/>
<dbReference type="PDBsum" id="3DB1"/>
<dbReference type="SMR" id="Q3V3E1"/>
<dbReference type="FunCoup" id="Q3V3E1">
    <property type="interactions" value="1187"/>
</dbReference>
<dbReference type="IntAct" id="Q3V3E1">
    <property type="interactions" value="6"/>
</dbReference>
<dbReference type="STRING" id="10090.ENSMUSP00000158544"/>
<dbReference type="iPTMnet" id="Q3V3E1"/>
<dbReference type="PhosphoSitePlus" id="Q3V3E1"/>
<dbReference type="jPOST" id="Q3V3E1"/>
<dbReference type="PaxDb" id="10090-ENSMUSP00000045890"/>
<dbReference type="ProteomicsDB" id="297798"/>
<dbReference type="Antibodypedia" id="23818">
    <property type="antibodies" value="332 antibodies from 34 providers"/>
</dbReference>
<dbReference type="DNASU" id="328795"/>
<dbReference type="Ensembl" id="ENSMUST00000236745.2">
    <property type="protein sequence ID" value="ENSMUSP00000158544.2"/>
    <property type="gene ID" value="ENSMUSG00000042345.16"/>
</dbReference>
<dbReference type="GeneID" id="328795"/>
<dbReference type="KEGG" id="mmu:328795"/>
<dbReference type="UCSC" id="uc008bus.2">
    <property type="organism name" value="mouse"/>
</dbReference>
<dbReference type="AGR" id="MGI:1926074"/>
<dbReference type="CTD" id="53347"/>
<dbReference type="MGI" id="MGI:1926074">
    <property type="gene designation" value="Ubash3a"/>
</dbReference>
<dbReference type="VEuPathDB" id="HostDB:ENSMUSG00000042345"/>
<dbReference type="eggNOG" id="KOG3734">
    <property type="taxonomic scope" value="Eukaryota"/>
</dbReference>
<dbReference type="GeneTree" id="ENSGT00940000160841"/>
<dbReference type="HOGENOM" id="CLU_016516_0_0_1"/>
<dbReference type="InParanoid" id="Q3V3E1"/>
<dbReference type="OMA" id="AFNWKHI"/>
<dbReference type="OrthoDB" id="414418at2759"/>
<dbReference type="PhylomeDB" id="Q3V3E1"/>
<dbReference type="TreeFam" id="TF313334"/>
<dbReference type="BioGRID-ORCS" id="328795">
    <property type="hits" value="3 hits in 78 CRISPR screens"/>
</dbReference>
<dbReference type="ChiTaRS" id="Ubash3a">
    <property type="organism name" value="mouse"/>
</dbReference>
<dbReference type="EvolutionaryTrace" id="Q3V3E1"/>
<dbReference type="PRO" id="PR:Q3V3E1"/>
<dbReference type="Proteomes" id="UP000000589">
    <property type="component" value="Chromosome 17"/>
</dbReference>
<dbReference type="RNAct" id="Q3V3E1">
    <property type="molecule type" value="protein"/>
</dbReference>
<dbReference type="Bgee" id="ENSMUSG00000042345">
    <property type="expression patterns" value="Expressed in thymus and 57 other cell types or tissues"/>
</dbReference>
<dbReference type="ExpressionAtlas" id="Q3V3E1">
    <property type="expression patterns" value="baseline and differential"/>
</dbReference>
<dbReference type="GO" id="GO:0005829">
    <property type="term" value="C:cytosol"/>
    <property type="evidence" value="ECO:0007669"/>
    <property type="project" value="Ensembl"/>
</dbReference>
<dbReference type="GO" id="GO:0016607">
    <property type="term" value="C:nuclear speck"/>
    <property type="evidence" value="ECO:0007669"/>
    <property type="project" value="Ensembl"/>
</dbReference>
<dbReference type="GO" id="GO:0050860">
    <property type="term" value="P:negative regulation of T cell receptor signaling pathway"/>
    <property type="evidence" value="ECO:0000316"/>
    <property type="project" value="MGI"/>
</dbReference>
<dbReference type="GO" id="GO:0001817">
    <property type="term" value="P:regulation of cytokine production"/>
    <property type="evidence" value="ECO:0000316"/>
    <property type="project" value="MGI"/>
</dbReference>
<dbReference type="CDD" id="cd07067">
    <property type="entry name" value="HP_PGM_like"/>
    <property type="match status" value="1"/>
</dbReference>
<dbReference type="CDD" id="cd11937">
    <property type="entry name" value="SH3_UBASH3A"/>
    <property type="match status" value="1"/>
</dbReference>
<dbReference type="CDD" id="cd14300">
    <property type="entry name" value="UBA_UBS3A_like"/>
    <property type="match status" value="1"/>
</dbReference>
<dbReference type="FunFam" id="3.40.50.1240:FF:000016">
    <property type="entry name" value="Ubiquitin-associated and SH3 domain-containing protein A"/>
    <property type="match status" value="1"/>
</dbReference>
<dbReference type="FunFam" id="2.30.30.40:FF:000052">
    <property type="entry name" value="Ubiquitin-associated and SH3 domain-containing protein B"/>
    <property type="match status" value="1"/>
</dbReference>
<dbReference type="FunFam" id="1.10.8.10:FF:000053">
    <property type="entry name" value="Ubiquitin-associated and SH3 domain-containing, A"/>
    <property type="match status" value="1"/>
</dbReference>
<dbReference type="Gene3D" id="1.10.8.10">
    <property type="entry name" value="DNA helicase RuvA subunit, C-terminal domain"/>
    <property type="match status" value="1"/>
</dbReference>
<dbReference type="Gene3D" id="3.40.50.1240">
    <property type="entry name" value="Phosphoglycerate mutase-like"/>
    <property type="match status" value="1"/>
</dbReference>
<dbReference type="Gene3D" id="2.30.30.40">
    <property type="entry name" value="SH3 Domains"/>
    <property type="match status" value="1"/>
</dbReference>
<dbReference type="InterPro" id="IPR013078">
    <property type="entry name" value="His_Pase_superF_clade-1"/>
</dbReference>
<dbReference type="InterPro" id="IPR029033">
    <property type="entry name" value="His_PPase_superfam"/>
</dbReference>
<dbReference type="InterPro" id="IPR051710">
    <property type="entry name" value="Phosphatase_SH3-domain"/>
</dbReference>
<dbReference type="InterPro" id="IPR036028">
    <property type="entry name" value="SH3-like_dom_sf"/>
</dbReference>
<dbReference type="InterPro" id="IPR001452">
    <property type="entry name" value="SH3_domain"/>
</dbReference>
<dbReference type="InterPro" id="IPR015940">
    <property type="entry name" value="UBA"/>
</dbReference>
<dbReference type="InterPro" id="IPR009060">
    <property type="entry name" value="UBA-like_sf"/>
</dbReference>
<dbReference type="InterPro" id="IPR035634">
    <property type="entry name" value="UBASH3A_SH3"/>
</dbReference>
<dbReference type="PANTHER" id="PTHR16469">
    <property type="entry name" value="UBIQUITIN-ASSOCIATED AND SH3 DOMAIN-CONTAINING BA-RELATED"/>
    <property type="match status" value="1"/>
</dbReference>
<dbReference type="PANTHER" id="PTHR16469:SF7">
    <property type="entry name" value="UBIQUITIN-ASSOCIATED AND SH3 DOMAIN-CONTAINING PROTEIN A"/>
    <property type="match status" value="1"/>
</dbReference>
<dbReference type="Pfam" id="PF00300">
    <property type="entry name" value="His_Phos_1"/>
    <property type="match status" value="1"/>
</dbReference>
<dbReference type="Pfam" id="PF14604">
    <property type="entry name" value="SH3_9"/>
    <property type="match status" value="1"/>
</dbReference>
<dbReference type="Pfam" id="PF22562">
    <property type="entry name" value="UBA_7"/>
    <property type="match status" value="1"/>
</dbReference>
<dbReference type="SMART" id="SM00326">
    <property type="entry name" value="SH3"/>
    <property type="match status" value="1"/>
</dbReference>
<dbReference type="SUPFAM" id="SSF53254">
    <property type="entry name" value="Phosphoglycerate mutase-like"/>
    <property type="match status" value="1"/>
</dbReference>
<dbReference type="SUPFAM" id="SSF50044">
    <property type="entry name" value="SH3-domain"/>
    <property type="match status" value="1"/>
</dbReference>
<dbReference type="SUPFAM" id="SSF46934">
    <property type="entry name" value="UBA-like"/>
    <property type="match status" value="1"/>
</dbReference>
<dbReference type="PROSITE" id="PS50002">
    <property type="entry name" value="SH3"/>
    <property type="match status" value="1"/>
</dbReference>
<dbReference type="PROSITE" id="PS50030">
    <property type="entry name" value="UBA"/>
    <property type="match status" value="1"/>
</dbReference>
<protein>
    <recommendedName>
        <fullName>Ubiquitin-associated and SH3 domain-containing protein A</fullName>
    </recommendedName>
    <alternativeName>
        <fullName>Suppressor of T-cell receptor signaling 2</fullName>
        <shortName>STS-2</shortName>
    </alternativeName>
    <alternativeName>
        <fullName>T-cell ubiquitin ligand 1</fullName>
        <shortName>TULA-1</shortName>
    </alternativeName>
</protein>
<gene>
    <name type="primary">Ubash3a</name>
    <name type="ORF">Sts2</name>
</gene>
<name>UBS3A_MOUSE</name>
<comment type="function">
    <text evidence="1 4">Interferes with CBL-mediated down-regulation and degradation of receptor-type tyrosine kinases. Promotes accumulation of activated target receptors, such as T-cell receptors, EGFR and PDGFRB, on the cell surface. May inhibit dynamin-dependent endocytic pathways by functionally sequestering dynamin via its SH3 domain (By similarity). Exhibits negligible protein tyrosine phosphatase activity at neutral pH. May act as a dominant-negative regulator of UBASH3B-dependent dephosphorylation.</text>
</comment>
<comment type="subunit">
    <text evidence="1">Homodimer or homooligomer. Interacts with CBL. Part of a complex containing CBL and activated EGFR. Interacts with ubiquitin and with mono-ubiquitinated proteins. Interacts with dynamin (By similarity).</text>
</comment>
<comment type="subcellular location">
    <subcellularLocation>
        <location evidence="1">Cytoplasm</location>
    </subcellularLocation>
    <subcellularLocation>
        <location evidence="1">Nucleus</location>
    </subcellularLocation>
</comment>
<comment type="miscellaneous">
    <text>Has very nearly lost all enzyme activity. Has very low, but measurable tyrosine phosphatase activity at pH 5.0.</text>
</comment>
<feature type="chain" id="PRO_0000415372" description="Ubiquitin-associated and SH3 domain-containing protein A">
    <location>
        <begin position="1"/>
        <end position="624"/>
    </location>
</feature>
<feature type="domain" description="UBA" evidence="3">
    <location>
        <begin position="19"/>
        <end position="60"/>
    </location>
</feature>
<feature type="domain" description="SH3" evidence="2">
    <location>
        <begin position="238"/>
        <end position="303"/>
    </location>
</feature>
<feature type="region of interest" description="Phosphatase-like">
    <location>
        <begin position="358"/>
        <end position="624"/>
    </location>
</feature>
<feature type="sequence conflict" description="In Ref. 1; BAE41311." evidence="5" ref="1">
    <original>A</original>
    <variation>V</variation>
    <location>
        <position position="75"/>
    </location>
</feature>
<feature type="sequence conflict" description="In Ref. 1; BAE41311." evidence="5" ref="1">
    <original>C</original>
    <variation>S</variation>
    <location>
        <position position="331"/>
    </location>
</feature>
<feature type="sequence conflict" description="In Ref. 1; BAE41311." evidence="5" ref="1">
    <original>P</original>
    <variation>S</variation>
    <location>
        <position position="337"/>
    </location>
</feature>
<feature type="sequence conflict" description="In Ref. 1; BAE41311." evidence="5" ref="1">
    <original>S</original>
    <variation>F</variation>
    <location>
        <position position="444"/>
    </location>
</feature>
<feature type="sequence conflict" description="In Ref. 1; BAE41311." evidence="5" ref="1">
    <original>E</original>
    <variation>D</variation>
    <location>
        <position position="463"/>
    </location>
</feature>
<feature type="strand" evidence="6">
    <location>
        <begin position="360"/>
        <end position="365"/>
    </location>
</feature>
<feature type="helix" evidence="6">
    <location>
        <begin position="370"/>
        <end position="374"/>
    </location>
</feature>
<feature type="helix" evidence="6">
    <location>
        <begin position="378"/>
        <end position="381"/>
    </location>
</feature>
<feature type="strand" evidence="7">
    <location>
        <begin position="385"/>
        <end position="387"/>
    </location>
</feature>
<feature type="helix" evidence="6">
    <location>
        <begin position="406"/>
        <end position="412"/>
    </location>
</feature>
<feature type="helix" evidence="6">
    <location>
        <begin position="418"/>
        <end position="434"/>
    </location>
</feature>
<feature type="strand" evidence="6">
    <location>
        <begin position="438"/>
        <end position="443"/>
    </location>
</feature>
<feature type="helix" evidence="6">
    <location>
        <begin position="447"/>
        <end position="459"/>
    </location>
</feature>
<feature type="turn" evidence="6">
    <location>
        <begin position="463"/>
        <end position="465"/>
    </location>
</feature>
<feature type="strand" evidence="6">
    <location>
        <begin position="468"/>
        <end position="470"/>
    </location>
</feature>
<feature type="helix" evidence="6">
    <location>
        <begin position="472"/>
        <end position="474"/>
    </location>
</feature>
<feature type="helix" evidence="6">
    <location>
        <begin position="478"/>
        <end position="480"/>
    </location>
</feature>
<feature type="helix" evidence="6">
    <location>
        <begin position="485"/>
        <end position="488"/>
    </location>
</feature>
<feature type="helix" evidence="6">
    <location>
        <begin position="492"/>
        <end position="497"/>
    </location>
</feature>
<feature type="helix" evidence="6">
    <location>
        <begin position="512"/>
        <end position="514"/>
    </location>
</feature>
<feature type="helix" evidence="6">
    <location>
        <begin position="521"/>
        <end position="536"/>
    </location>
</feature>
<feature type="strand" evidence="6">
    <location>
        <begin position="544"/>
        <end position="550"/>
    </location>
</feature>
<feature type="helix" evidence="6">
    <location>
        <begin position="554"/>
        <end position="557"/>
    </location>
</feature>
<feature type="helix" evidence="6">
    <location>
        <begin position="560"/>
        <end position="563"/>
    </location>
</feature>
<feature type="helix" evidence="6">
    <location>
        <begin position="570"/>
        <end position="578"/>
    </location>
</feature>
<feature type="strand" evidence="6">
    <location>
        <begin position="585"/>
        <end position="590"/>
    </location>
</feature>
<feature type="turn" evidence="6">
    <location>
        <begin position="592"/>
        <end position="594"/>
    </location>
</feature>
<feature type="strand" evidence="6">
    <location>
        <begin position="597"/>
        <end position="600"/>
    </location>
</feature>
<feature type="helix" evidence="6">
    <location>
        <begin position="617"/>
        <end position="620"/>
    </location>
</feature>
<sequence length="624" mass="70145">MAAGETQLYAKVSNKLKGRSTPSLLDPLLAMGFPTHTALKALAATGRKTAEAAADWLHGHCNDPSLDDPIPQEYALFLCPTGPLLEKLQEFWRESRRQCAKNRAHEVFPHVTLCDFFTCEDQKVECLYEALRRAGDRILGSFPTLVPLVLHSSISYLGFFINDSPADAIREFAMAFATEAAVLADCTIKPCTKQLHLTLAHKFYPHHQRTLEQLAKAIQPSHSCQWTAALYSRDMRFVHYQTLKALFQYKPQNADELMLSAGDYIFVDPTQQEEASEGWAIGISHRTGCRGFLPENYTERANEADTWVKHRTYTFNLAMDLNSRKDFEASCRGNGEPHTPSMSKSVSSIQALQATISRRGILVVRHGERVDQVFGKSWLQQCTTADGKYYRPDLNFPRSLPRRSNGIKDFENDPPLSSCGIFQARLAGEALLDSGVRVTAVFASPALRCVQTAKHILEELKLEKKLKIRVEPGIFEWMKWEASKATLTFLTLEELKEANFNVDLDYRPALPRCSLMPAESYDQYVERCAVSMGQIINTCPQDMGITLIVSHSSALDSCTRPLLGLPPRECGDFAQLVRKIPSLGMCFCEENREDGKWDLVNPPVKTLTHGANSVFNWRNWISSN</sequence>
<evidence type="ECO:0000250" key="1"/>
<evidence type="ECO:0000255" key="2">
    <source>
        <dbReference type="PROSITE-ProRule" id="PRU00192"/>
    </source>
</evidence>
<evidence type="ECO:0000255" key="3">
    <source>
        <dbReference type="PROSITE-ProRule" id="PRU00212"/>
    </source>
</evidence>
<evidence type="ECO:0000269" key="4">
    <source>
    </source>
</evidence>
<evidence type="ECO:0000305" key="5"/>
<evidence type="ECO:0007829" key="6">
    <source>
        <dbReference type="PDB" id="3D4I"/>
    </source>
</evidence>
<evidence type="ECO:0007829" key="7">
    <source>
        <dbReference type="PDB" id="3DB1"/>
    </source>
</evidence>
<keyword id="KW-0002">3D-structure</keyword>
<keyword id="KW-0963">Cytoplasm</keyword>
<keyword id="KW-0539">Nucleus</keyword>
<keyword id="KW-1185">Reference proteome</keyword>
<keyword id="KW-0728">SH3 domain</keyword>
<organism>
    <name type="scientific">Mus musculus</name>
    <name type="common">Mouse</name>
    <dbReference type="NCBI Taxonomy" id="10090"/>
    <lineage>
        <taxon>Eukaryota</taxon>
        <taxon>Metazoa</taxon>
        <taxon>Chordata</taxon>
        <taxon>Craniata</taxon>
        <taxon>Vertebrata</taxon>
        <taxon>Euteleostomi</taxon>
        <taxon>Mammalia</taxon>
        <taxon>Eutheria</taxon>
        <taxon>Euarchontoglires</taxon>
        <taxon>Glires</taxon>
        <taxon>Rodentia</taxon>
        <taxon>Myomorpha</taxon>
        <taxon>Muroidea</taxon>
        <taxon>Muridae</taxon>
        <taxon>Murinae</taxon>
        <taxon>Mus</taxon>
        <taxon>Mus</taxon>
    </lineage>
</organism>
<reference key="1">
    <citation type="journal article" date="2005" name="Science">
        <title>The transcriptional landscape of the mammalian genome.</title>
        <authorList>
            <person name="Carninci P."/>
            <person name="Kasukawa T."/>
            <person name="Katayama S."/>
            <person name="Gough J."/>
            <person name="Frith M.C."/>
            <person name="Maeda N."/>
            <person name="Oyama R."/>
            <person name="Ravasi T."/>
            <person name="Lenhard B."/>
            <person name="Wells C."/>
            <person name="Kodzius R."/>
            <person name="Shimokawa K."/>
            <person name="Bajic V.B."/>
            <person name="Brenner S.E."/>
            <person name="Batalov S."/>
            <person name="Forrest A.R."/>
            <person name="Zavolan M."/>
            <person name="Davis M.J."/>
            <person name="Wilming L.G."/>
            <person name="Aidinis V."/>
            <person name="Allen J.E."/>
            <person name="Ambesi-Impiombato A."/>
            <person name="Apweiler R."/>
            <person name="Aturaliya R.N."/>
            <person name="Bailey T.L."/>
            <person name="Bansal M."/>
            <person name="Baxter L."/>
            <person name="Beisel K.W."/>
            <person name="Bersano T."/>
            <person name="Bono H."/>
            <person name="Chalk A.M."/>
            <person name="Chiu K.P."/>
            <person name="Choudhary V."/>
            <person name="Christoffels A."/>
            <person name="Clutterbuck D.R."/>
            <person name="Crowe M.L."/>
            <person name="Dalla E."/>
            <person name="Dalrymple B.P."/>
            <person name="de Bono B."/>
            <person name="Della Gatta G."/>
            <person name="di Bernardo D."/>
            <person name="Down T."/>
            <person name="Engstrom P."/>
            <person name="Fagiolini M."/>
            <person name="Faulkner G."/>
            <person name="Fletcher C.F."/>
            <person name="Fukushima T."/>
            <person name="Furuno M."/>
            <person name="Futaki S."/>
            <person name="Gariboldi M."/>
            <person name="Georgii-Hemming P."/>
            <person name="Gingeras T.R."/>
            <person name="Gojobori T."/>
            <person name="Green R.E."/>
            <person name="Gustincich S."/>
            <person name="Harbers M."/>
            <person name="Hayashi Y."/>
            <person name="Hensch T.K."/>
            <person name="Hirokawa N."/>
            <person name="Hill D."/>
            <person name="Huminiecki L."/>
            <person name="Iacono M."/>
            <person name="Ikeo K."/>
            <person name="Iwama A."/>
            <person name="Ishikawa T."/>
            <person name="Jakt M."/>
            <person name="Kanapin A."/>
            <person name="Katoh M."/>
            <person name="Kawasawa Y."/>
            <person name="Kelso J."/>
            <person name="Kitamura H."/>
            <person name="Kitano H."/>
            <person name="Kollias G."/>
            <person name="Krishnan S.P."/>
            <person name="Kruger A."/>
            <person name="Kummerfeld S.K."/>
            <person name="Kurochkin I.V."/>
            <person name="Lareau L.F."/>
            <person name="Lazarevic D."/>
            <person name="Lipovich L."/>
            <person name="Liu J."/>
            <person name="Liuni S."/>
            <person name="McWilliam S."/>
            <person name="Madan Babu M."/>
            <person name="Madera M."/>
            <person name="Marchionni L."/>
            <person name="Matsuda H."/>
            <person name="Matsuzawa S."/>
            <person name="Miki H."/>
            <person name="Mignone F."/>
            <person name="Miyake S."/>
            <person name="Morris K."/>
            <person name="Mottagui-Tabar S."/>
            <person name="Mulder N."/>
            <person name="Nakano N."/>
            <person name="Nakauchi H."/>
            <person name="Ng P."/>
            <person name="Nilsson R."/>
            <person name="Nishiguchi S."/>
            <person name="Nishikawa S."/>
            <person name="Nori F."/>
            <person name="Ohara O."/>
            <person name="Okazaki Y."/>
            <person name="Orlando V."/>
            <person name="Pang K.C."/>
            <person name="Pavan W.J."/>
            <person name="Pavesi G."/>
            <person name="Pesole G."/>
            <person name="Petrovsky N."/>
            <person name="Piazza S."/>
            <person name="Reed J."/>
            <person name="Reid J.F."/>
            <person name="Ring B.Z."/>
            <person name="Ringwald M."/>
            <person name="Rost B."/>
            <person name="Ruan Y."/>
            <person name="Salzberg S.L."/>
            <person name="Sandelin A."/>
            <person name="Schneider C."/>
            <person name="Schoenbach C."/>
            <person name="Sekiguchi K."/>
            <person name="Semple C.A."/>
            <person name="Seno S."/>
            <person name="Sessa L."/>
            <person name="Sheng Y."/>
            <person name="Shibata Y."/>
            <person name="Shimada H."/>
            <person name="Shimada K."/>
            <person name="Silva D."/>
            <person name="Sinclair B."/>
            <person name="Sperling S."/>
            <person name="Stupka E."/>
            <person name="Sugiura K."/>
            <person name="Sultana R."/>
            <person name="Takenaka Y."/>
            <person name="Taki K."/>
            <person name="Tammoja K."/>
            <person name="Tan S.L."/>
            <person name="Tang S."/>
            <person name="Taylor M.S."/>
            <person name="Tegner J."/>
            <person name="Teichmann S.A."/>
            <person name="Ueda H.R."/>
            <person name="van Nimwegen E."/>
            <person name="Verardo R."/>
            <person name="Wei C.L."/>
            <person name="Yagi K."/>
            <person name="Yamanishi H."/>
            <person name="Zabarovsky E."/>
            <person name="Zhu S."/>
            <person name="Zimmer A."/>
            <person name="Hide W."/>
            <person name="Bult C."/>
            <person name="Grimmond S.M."/>
            <person name="Teasdale R.D."/>
            <person name="Liu E.T."/>
            <person name="Brusic V."/>
            <person name="Quackenbush J."/>
            <person name="Wahlestedt C."/>
            <person name="Mattick J.S."/>
            <person name="Hume D.A."/>
            <person name="Kai C."/>
            <person name="Sasaki D."/>
            <person name="Tomaru Y."/>
            <person name="Fukuda S."/>
            <person name="Kanamori-Katayama M."/>
            <person name="Suzuki M."/>
            <person name="Aoki J."/>
            <person name="Arakawa T."/>
            <person name="Iida J."/>
            <person name="Imamura K."/>
            <person name="Itoh M."/>
            <person name="Kato T."/>
            <person name="Kawaji H."/>
            <person name="Kawagashira N."/>
            <person name="Kawashima T."/>
            <person name="Kojima M."/>
            <person name="Kondo S."/>
            <person name="Konno H."/>
            <person name="Nakano K."/>
            <person name="Ninomiya N."/>
            <person name="Nishio T."/>
            <person name="Okada M."/>
            <person name="Plessy C."/>
            <person name="Shibata K."/>
            <person name="Shiraki T."/>
            <person name="Suzuki S."/>
            <person name="Tagami M."/>
            <person name="Waki K."/>
            <person name="Watahiki A."/>
            <person name="Okamura-Oho Y."/>
            <person name="Suzuki H."/>
            <person name="Kawai J."/>
            <person name="Hayashizaki Y."/>
        </authorList>
    </citation>
    <scope>NUCLEOTIDE SEQUENCE [LARGE SCALE MRNA]</scope>
    <source>
        <strain>C57BL/6J</strain>
        <strain>NOD</strain>
        <tissue>Thymus</tissue>
    </source>
</reference>
<reference key="2">
    <citation type="journal article" date="2009" name="PLoS Biol.">
        <title>Lineage-specific biology revealed by a finished genome assembly of the mouse.</title>
        <authorList>
            <person name="Church D.M."/>
            <person name="Goodstadt L."/>
            <person name="Hillier L.W."/>
            <person name="Zody M.C."/>
            <person name="Goldstein S."/>
            <person name="She X."/>
            <person name="Bult C.J."/>
            <person name="Agarwala R."/>
            <person name="Cherry J.L."/>
            <person name="DiCuccio M."/>
            <person name="Hlavina W."/>
            <person name="Kapustin Y."/>
            <person name="Meric P."/>
            <person name="Maglott D."/>
            <person name="Birtle Z."/>
            <person name="Marques A.C."/>
            <person name="Graves T."/>
            <person name="Zhou S."/>
            <person name="Teague B."/>
            <person name="Potamousis K."/>
            <person name="Churas C."/>
            <person name="Place M."/>
            <person name="Herschleb J."/>
            <person name="Runnheim R."/>
            <person name="Forrest D."/>
            <person name="Amos-Landgraf J."/>
            <person name="Schwartz D.C."/>
            <person name="Cheng Z."/>
            <person name="Lindblad-Toh K."/>
            <person name="Eichler E.E."/>
            <person name="Ponting C.P."/>
        </authorList>
    </citation>
    <scope>NUCLEOTIDE SEQUENCE [LARGE SCALE GENOMIC DNA]</scope>
    <source>
        <strain>C57BL/6J</strain>
    </source>
</reference>
<reference key="3">
    <citation type="journal article" date="2010" name="J. Biol. Chem.">
        <title>Determination of the substrate specificity of protein-tyrosine phosphatase TULA-2 and identification of Syk as a TULA-2 substrate.</title>
        <authorList>
            <person name="Chen X."/>
            <person name="Ren L."/>
            <person name="Kim S."/>
            <person name="Carpino N."/>
            <person name="Daniel J.L."/>
            <person name="Kunapuli S.P."/>
            <person name="Tsygankov A.Y."/>
            <person name="Pei D."/>
        </authorList>
    </citation>
    <scope>LACK OF PROTEIN PHOSPHATASE ACTIVITY</scope>
</reference>
<reference key="4">
    <citation type="journal article" date="2009" name="Biochemistry">
        <title>Structural and functional characterization of the 2H-phosphatase domain of Sts-2 reveals an acid-dependent phosphatase activity.</title>
        <authorList>
            <person name="Chen Y."/>
            <person name="Jakoncic J."/>
            <person name="Carpino N."/>
            <person name="Nassar N."/>
        </authorList>
    </citation>
    <scope>X-RAY CRYSTALLOGRAPHY (1.95 ANGSTROMS) OF 354-622</scope>
    <scope>FUNCTION</scope>
    <scope>VERY LOW PHOSPHATASE ACTIVITY AT PH 5</scope>
</reference>
<proteinExistence type="evidence at protein level"/>
<accession>Q3V3E1</accession>
<accession>Q3TED7</accession>